<comment type="function">
    <text evidence="1">Component of the 26S proteasome, a multiprotein complex involved in the ATP-dependent degradation of ubiquitinated proteins. This complex plays a key role in the maintenance of protein homeostasis by removing misfolded or damaged proteins, which could impair cellular functions, and by removing proteins whose functions are no longer required. Therefore, the proteasome participates in numerous cellular processes, including cell cycle progression, apoptosis, or DNA damage repair. In the complex, PSMD11 is required for proteasome assembly. Plays a key role in increased proteasome activity in embryonic stem cells (ESCs): its high expression in ESCs promotes enhanced assembly of the 26S proteasome, followed by higher proteasome activity.</text>
</comment>
<comment type="subunit">
    <text evidence="1 3">Component of the 19S proteasome regulatory particle complex. The 26S proteasome consists of a 20S core particle (CP) and two 19S regulatory subunits (RP). The regulatory particle is made of a lid composed of 9 subunits including PSMD11, a base containing 6 ATPases and few additional components.</text>
</comment>
<comment type="similarity">
    <text evidence="5">Belongs to the proteasome subunit S9 family.</text>
</comment>
<sequence>MAAAAVVEFQRAQSLLSTDREASIDILHSIVKRDIQENDEEAVQVKEQSILELGSLLAKTGQAAELGGLLKYVRPFLNSISKAKAARLVRSLLDLFLDMEAATGQEVELCLECIEWAKSEKRTFLRQALEARLVSLYFDTKRYQEALHLGSQLLRELKKMDDKALLVEVQLLESKTYHALSNLPKARAALTSARTTANAIYCPPKLQATLDMQSGIIHAAEEKDWKTAYSYFYEAFEGYDSIDSPKAITSLKYMLLCKIMLNTPEDVQALVSGKLALRYAGRQTEALKCVAQASKNRSLADFEKALTDYRAELRDDPIISTHLAKLYDNLLEQNLIRVIEPFSRVQIEHISSLIKLSKADVERKLSQMILDKKFHGILDQGEGVLIIFDEPPVDKTYEAALETIQNMSKVVDSLYSKAKKLT</sequence>
<organism>
    <name type="scientific">Mus musculus</name>
    <name type="common">Mouse</name>
    <dbReference type="NCBI Taxonomy" id="10090"/>
    <lineage>
        <taxon>Eukaryota</taxon>
        <taxon>Metazoa</taxon>
        <taxon>Chordata</taxon>
        <taxon>Craniata</taxon>
        <taxon>Vertebrata</taxon>
        <taxon>Euteleostomi</taxon>
        <taxon>Mammalia</taxon>
        <taxon>Eutheria</taxon>
        <taxon>Euarchontoglires</taxon>
        <taxon>Glires</taxon>
        <taxon>Rodentia</taxon>
        <taxon>Myomorpha</taxon>
        <taxon>Muroidea</taxon>
        <taxon>Muridae</taxon>
        <taxon>Murinae</taxon>
        <taxon>Mus</taxon>
        <taxon>Mus</taxon>
    </lineage>
</organism>
<reference key="1">
    <citation type="journal article" date="2005" name="Science">
        <title>The transcriptional landscape of the mammalian genome.</title>
        <authorList>
            <person name="Carninci P."/>
            <person name="Kasukawa T."/>
            <person name="Katayama S."/>
            <person name="Gough J."/>
            <person name="Frith M.C."/>
            <person name="Maeda N."/>
            <person name="Oyama R."/>
            <person name="Ravasi T."/>
            <person name="Lenhard B."/>
            <person name="Wells C."/>
            <person name="Kodzius R."/>
            <person name="Shimokawa K."/>
            <person name="Bajic V.B."/>
            <person name="Brenner S.E."/>
            <person name="Batalov S."/>
            <person name="Forrest A.R."/>
            <person name="Zavolan M."/>
            <person name="Davis M.J."/>
            <person name="Wilming L.G."/>
            <person name="Aidinis V."/>
            <person name="Allen J.E."/>
            <person name="Ambesi-Impiombato A."/>
            <person name="Apweiler R."/>
            <person name="Aturaliya R.N."/>
            <person name="Bailey T.L."/>
            <person name="Bansal M."/>
            <person name="Baxter L."/>
            <person name="Beisel K.W."/>
            <person name="Bersano T."/>
            <person name="Bono H."/>
            <person name="Chalk A.M."/>
            <person name="Chiu K.P."/>
            <person name="Choudhary V."/>
            <person name="Christoffels A."/>
            <person name="Clutterbuck D.R."/>
            <person name="Crowe M.L."/>
            <person name="Dalla E."/>
            <person name="Dalrymple B.P."/>
            <person name="de Bono B."/>
            <person name="Della Gatta G."/>
            <person name="di Bernardo D."/>
            <person name="Down T."/>
            <person name="Engstrom P."/>
            <person name="Fagiolini M."/>
            <person name="Faulkner G."/>
            <person name="Fletcher C.F."/>
            <person name="Fukushima T."/>
            <person name="Furuno M."/>
            <person name="Futaki S."/>
            <person name="Gariboldi M."/>
            <person name="Georgii-Hemming P."/>
            <person name="Gingeras T.R."/>
            <person name="Gojobori T."/>
            <person name="Green R.E."/>
            <person name="Gustincich S."/>
            <person name="Harbers M."/>
            <person name="Hayashi Y."/>
            <person name="Hensch T.K."/>
            <person name="Hirokawa N."/>
            <person name="Hill D."/>
            <person name="Huminiecki L."/>
            <person name="Iacono M."/>
            <person name="Ikeo K."/>
            <person name="Iwama A."/>
            <person name="Ishikawa T."/>
            <person name="Jakt M."/>
            <person name="Kanapin A."/>
            <person name="Katoh M."/>
            <person name="Kawasawa Y."/>
            <person name="Kelso J."/>
            <person name="Kitamura H."/>
            <person name="Kitano H."/>
            <person name="Kollias G."/>
            <person name="Krishnan S.P."/>
            <person name="Kruger A."/>
            <person name="Kummerfeld S.K."/>
            <person name="Kurochkin I.V."/>
            <person name="Lareau L.F."/>
            <person name="Lazarevic D."/>
            <person name="Lipovich L."/>
            <person name="Liu J."/>
            <person name="Liuni S."/>
            <person name="McWilliam S."/>
            <person name="Madan Babu M."/>
            <person name="Madera M."/>
            <person name="Marchionni L."/>
            <person name="Matsuda H."/>
            <person name="Matsuzawa S."/>
            <person name="Miki H."/>
            <person name="Mignone F."/>
            <person name="Miyake S."/>
            <person name="Morris K."/>
            <person name="Mottagui-Tabar S."/>
            <person name="Mulder N."/>
            <person name="Nakano N."/>
            <person name="Nakauchi H."/>
            <person name="Ng P."/>
            <person name="Nilsson R."/>
            <person name="Nishiguchi S."/>
            <person name="Nishikawa S."/>
            <person name="Nori F."/>
            <person name="Ohara O."/>
            <person name="Okazaki Y."/>
            <person name="Orlando V."/>
            <person name="Pang K.C."/>
            <person name="Pavan W.J."/>
            <person name="Pavesi G."/>
            <person name="Pesole G."/>
            <person name="Petrovsky N."/>
            <person name="Piazza S."/>
            <person name="Reed J."/>
            <person name="Reid J.F."/>
            <person name="Ring B.Z."/>
            <person name="Ringwald M."/>
            <person name="Rost B."/>
            <person name="Ruan Y."/>
            <person name="Salzberg S.L."/>
            <person name="Sandelin A."/>
            <person name="Schneider C."/>
            <person name="Schoenbach C."/>
            <person name="Sekiguchi K."/>
            <person name="Semple C.A."/>
            <person name="Seno S."/>
            <person name="Sessa L."/>
            <person name="Sheng Y."/>
            <person name="Shibata Y."/>
            <person name="Shimada H."/>
            <person name="Shimada K."/>
            <person name="Silva D."/>
            <person name="Sinclair B."/>
            <person name="Sperling S."/>
            <person name="Stupka E."/>
            <person name="Sugiura K."/>
            <person name="Sultana R."/>
            <person name="Takenaka Y."/>
            <person name="Taki K."/>
            <person name="Tammoja K."/>
            <person name="Tan S.L."/>
            <person name="Tang S."/>
            <person name="Taylor M.S."/>
            <person name="Tegner J."/>
            <person name="Teichmann S.A."/>
            <person name="Ueda H.R."/>
            <person name="van Nimwegen E."/>
            <person name="Verardo R."/>
            <person name="Wei C.L."/>
            <person name="Yagi K."/>
            <person name="Yamanishi H."/>
            <person name="Zabarovsky E."/>
            <person name="Zhu S."/>
            <person name="Zimmer A."/>
            <person name="Hide W."/>
            <person name="Bult C."/>
            <person name="Grimmond S.M."/>
            <person name="Teasdale R.D."/>
            <person name="Liu E.T."/>
            <person name="Brusic V."/>
            <person name="Quackenbush J."/>
            <person name="Wahlestedt C."/>
            <person name="Mattick J.S."/>
            <person name="Hume D.A."/>
            <person name="Kai C."/>
            <person name="Sasaki D."/>
            <person name="Tomaru Y."/>
            <person name="Fukuda S."/>
            <person name="Kanamori-Katayama M."/>
            <person name="Suzuki M."/>
            <person name="Aoki J."/>
            <person name="Arakawa T."/>
            <person name="Iida J."/>
            <person name="Imamura K."/>
            <person name="Itoh M."/>
            <person name="Kato T."/>
            <person name="Kawaji H."/>
            <person name="Kawagashira N."/>
            <person name="Kawashima T."/>
            <person name="Kojima M."/>
            <person name="Kondo S."/>
            <person name="Konno H."/>
            <person name="Nakano K."/>
            <person name="Ninomiya N."/>
            <person name="Nishio T."/>
            <person name="Okada M."/>
            <person name="Plessy C."/>
            <person name="Shibata K."/>
            <person name="Shiraki T."/>
            <person name="Suzuki S."/>
            <person name="Tagami M."/>
            <person name="Waki K."/>
            <person name="Watahiki A."/>
            <person name="Okamura-Oho Y."/>
            <person name="Suzuki H."/>
            <person name="Kawai J."/>
            <person name="Hayashizaki Y."/>
        </authorList>
    </citation>
    <scope>NUCLEOTIDE SEQUENCE [LARGE SCALE MRNA]</scope>
    <source>
        <strain>BALB/cJ</strain>
        <strain>C57BL/6J</strain>
        <tissue>Blood</tissue>
        <tissue>Spinal ganglion</tissue>
    </source>
</reference>
<reference key="2">
    <citation type="submission" date="2005-07" db="UniProtKB">
        <authorList>
            <person name="Bienvenut W.V."/>
        </authorList>
    </citation>
    <scope>PROTEIN SEQUENCE OF 2-11</scope>
    <scope>CLEAVAGE OF INITIATOR METHIONINE</scope>
    <scope>ACETYLATION AT ALA-2</scope>
    <scope>IDENTIFICATION BY MASS SPECTROMETRY</scope>
    <source>
        <strain>C57BL/6J</strain>
        <tissue>Liver</tissue>
    </source>
</reference>
<reference key="3">
    <citation type="submission" date="2007-03" db="UniProtKB">
        <authorList>
            <person name="Lubec G."/>
            <person name="Klug S."/>
            <person name="Friebe K."/>
        </authorList>
    </citation>
    <scope>PROTEIN SEQUENCE OF 143-155; 326-337 AND 345-355</scope>
    <scope>IDENTIFICATION BY MASS SPECTROMETRY</scope>
    <source>
        <tissue>Hippocampus</tissue>
    </source>
</reference>
<reference key="4">
    <citation type="journal article" date="2006" name="Circ. Res.">
        <title>Mapping the murine cardiac 26S proteasome complexes.</title>
        <authorList>
            <person name="Gomes A.V."/>
            <person name="Zong C."/>
            <person name="Edmondson R.D."/>
            <person name="Li X."/>
            <person name="Stefani E."/>
            <person name="Zhang J."/>
            <person name="Jones R.C."/>
            <person name="Thyparambil S."/>
            <person name="Wang G.W."/>
            <person name="Qiao X."/>
            <person name="Bardag-Gorce F."/>
            <person name="Ping P."/>
        </authorList>
    </citation>
    <scope>IDENTIFICATION IN THE 19S PROTEASOME REGULATORY COMPLEX</scope>
    <scope>ACETYLATION AT ALA-2</scope>
</reference>
<reference key="5">
    <citation type="journal article" date="2010" name="Cell">
        <title>A tissue-specific atlas of mouse protein phosphorylation and expression.</title>
        <authorList>
            <person name="Huttlin E.L."/>
            <person name="Jedrychowski M.P."/>
            <person name="Elias J.E."/>
            <person name="Goswami T."/>
            <person name="Rad R."/>
            <person name="Beausoleil S.A."/>
            <person name="Villen J."/>
            <person name="Haas W."/>
            <person name="Sowa M.E."/>
            <person name="Gygi S.P."/>
        </authorList>
    </citation>
    <scope>PHOSPHORYLATION [LARGE SCALE ANALYSIS] AT SER-14</scope>
    <scope>IDENTIFICATION BY MASS SPECTROMETRY [LARGE SCALE ANALYSIS]</scope>
    <source>
        <tissue>Brain</tissue>
        <tissue>Brown adipose tissue</tissue>
        <tissue>Heart</tissue>
        <tissue>Kidney</tissue>
        <tissue>Liver</tissue>
        <tissue>Lung</tissue>
        <tissue>Pancreas</tissue>
        <tissue>Spleen</tissue>
        <tissue>Testis</tissue>
    </source>
</reference>
<accession>Q8BG32</accession>
<keyword id="KW-0007">Acetylation</keyword>
<keyword id="KW-0903">Direct protein sequencing</keyword>
<keyword id="KW-1017">Isopeptide bond</keyword>
<keyword id="KW-0597">Phosphoprotein</keyword>
<keyword id="KW-0647">Proteasome</keyword>
<keyword id="KW-1185">Reference proteome</keyword>
<keyword id="KW-0832">Ubl conjugation</keyword>
<gene>
    <name type="primary">Psmd11</name>
</gene>
<feature type="initiator methionine" description="Removed" evidence="3 4">
    <location>
        <position position="1"/>
    </location>
</feature>
<feature type="chain" id="PRO_0000173858" description="26S proteasome non-ATPase regulatory subunit 11">
    <location>
        <begin position="2"/>
        <end position="422"/>
    </location>
</feature>
<feature type="domain" description="PCI" evidence="2">
    <location>
        <begin position="224"/>
        <end position="392"/>
    </location>
</feature>
<feature type="modified residue" description="N-acetylalanine" evidence="3 4">
    <location>
        <position position="2"/>
    </location>
</feature>
<feature type="modified residue" description="Phosphoserine" evidence="6">
    <location>
        <position position="14"/>
    </location>
</feature>
<feature type="modified residue" description="Phosphoserine" evidence="1">
    <location>
        <position position="23"/>
    </location>
</feature>
<feature type="cross-link" description="Glycyl lysine isopeptide (Lys-Gly) (interchain with G-Cter in SUMO2)" evidence="1">
    <location>
        <position position="274"/>
    </location>
</feature>
<dbReference type="EMBL" id="AK051738">
    <property type="protein sequence ID" value="BAC34746.1"/>
    <property type="molecule type" value="mRNA"/>
</dbReference>
<dbReference type="EMBL" id="AK089942">
    <property type="protein sequence ID" value="BAC41009.1"/>
    <property type="molecule type" value="mRNA"/>
</dbReference>
<dbReference type="CCDS" id="CCDS25133.1"/>
<dbReference type="RefSeq" id="NP_848731.2">
    <property type="nucleotide sequence ID" value="NM_178616.3"/>
</dbReference>
<dbReference type="SMR" id="Q8BG32"/>
<dbReference type="BioGRID" id="213215">
    <property type="interactions" value="54"/>
</dbReference>
<dbReference type="FunCoup" id="Q8BG32">
    <property type="interactions" value="2442"/>
</dbReference>
<dbReference type="IntAct" id="Q8BG32">
    <property type="interactions" value="3"/>
</dbReference>
<dbReference type="MINT" id="Q8BG32"/>
<dbReference type="STRING" id="10090.ENSMUSP00000017572"/>
<dbReference type="GlyGen" id="Q8BG32">
    <property type="glycosylation" value="2 sites, 1 N-linked glycan (1 site), 1 O-linked glycan (1 site)"/>
</dbReference>
<dbReference type="iPTMnet" id="Q8BG32"/>
<dbReference type="MetOSite" id="Q8BG32"/>
<dbReference type="PhosphoSitePlus" id="Q8BG32"/>
<dbReference type="SwissPalm" id="Q8BG32"/>
<dbReference type="jPOST" id="Q8BG32"/>
<dbReference type="PaxDb" id="10090-ENSMUSP00000017572"/>
<dbReference type="ProteomicsDB" id="291830"/>
<dbReference type="Pumba" id="Q8BG32"/>
<dbReference type="Antibodypedia" id="15394">
    <property type="antibodies" value="320 antibodies from 35 providers"/>
</dbReference>
<dbReference type="DNASU" id="69077"/>
<dbReference type="Ensembl" id="ENSMUST00000017572.14">
    <property type="protein sequence ID" value="ENSMUSP00000017572.8"/>
    <property type="gene ID" value="ENSMUSG00000017428.17"/>
</dbReference>
<dbReference type="Ensembl" id="ENSMUST00000173938.8">
    <property type="protein sequence ID" value="ENSMUSP00000133571.2"/>
    <property type="gene ID" value="ENSMUSG00000017428.17"/>
</dbReference>
<dbReference type="GeneID" id="69077"/>
<dbReference type="KEGG" id="mmu:69077"/>
<dbReference type="UCSC" id="uc007kme.1">
    <property type="organism name" value="mouse"/>
</dbReference>
<dbReference type="AGR" id="MGI:1916327"/>
<dbReference type="CTD" id="5717"/>
<dbReference type="MGI" id="MGI:1916327">
    <property type="gene designation" value="Psmd11"/>
</dbReference>
<dbReference type="VEuPathDB" id="HostDB:ENSMUSG00000017428"/>
<dbReference type="eggNOG" id="KOG1463">
    <property type="taxonomic scope" value="Eukaryota"/>
</dbReference>
<dbReference type="GeneTree" id="ENSGT00530000063301"/>
<dbReference type="HOGENOM" id="CLU_029573_2_1_1"/>
<dbReference type="InParanoid" id="Q8BG32"/>
<dbReference type="OMA" id="ESKIYHA"/>
<dbReference type="OrthoDB" id="34470at9989"/>
<dbReference type="PhylomeDB" id="Q8BG32"/>
<dbReference type="TreeFam" id="TF106230"/>
<dbReference type="Reactome" id="R-MMU-1169091">
    <property type="pathway name" value="Activation of NF-kappaB in B cells"/>
</dbReference>
<dbReference type="Reactome" id="R-MMU-1234176">
    <property type="pathway name" value="Oxygen-dependent proline hydroxylation of Hypoxia-inducible Factor Alpha"/>
</dbReference>
<dbReference type="Reactome" id="R-MMU-1236978">
    <property type="pathway name" value="Cross-presentation of soluble exogenous antigens (endosomes)"/>
</dbReference>
<dbReference type="Reactome" id="R-MMU-174084">
    <property type="pathway name" value="Autodegradation of Cdh1 by Cdh1:APC/C"/>
</dbReference>
<dbReference type="Reactome" id="R-MMU-174154">
    <property type="pathway name" value="APC/C:Cdc20 mediated degradation of Securin"/>
</dbReference>
<dbReference type="Reactome" id="R-MMU-174178">
    <property type="pathway name" value="APC/C:Cdh1 mediated degradation of Cdc20 and other APC/C:Cdh1 targeted proteins in late mitosis/early G1"/>
</dbReference>
<dbReference type="Reactome" id="R-MMU-174184">
    <property type="pathway name" value="Cdc20:Phospho-APC/C mediated degradation of Cyclin A"/>
</dbReference>
<dbReference type="Reactome" id="R-MMU-187577">
    <property type="pathway name" value="SCF(Skp2)-mediated degradation of p27/p21"/>
</dbReference>
<dbReference type="Reactome" id="R-MMU-195253">
    <property type="pathway name" value="Degradation of beta-catenin by the destruction complex"/>
</dbReference>
<dbReference type="Reactome" id="R-MMU-202424">
    <property type="pathway name" value="Downstream TCR signaling"/>
</dbReference>
<dbReference type="Reactome" id="R-MMU-2467813">
    <property type="pathway name" value="Separation of Sister Chromatids"/>
</dbReference>
<dbReference type="Reactome" id="R-MMU-2871837">
    <property type="pathway name" value="FCERI mediated NF-kB activation"/>
</dbReference>
<dbReference type="Reactome" id="R-MMU-349425">
    <property type="pathway name" value="Autodegradation of the E3 ubiquitin ligase COP1"/>
</dbReference>
<dbReference type="Reactome" id="R-MMU-350562">
    <property type="pathway name" value="Regulation of ornithine decarboxylase (ODC)"/>
</dbReference>
<dbReference type="Reactome" id="R-MMU-382556">
    <property type="pathway name" value="ABC-family proteins mediated transport"/>
</dbReference>
<dbReference type="Reactome" id="R-MMU-450408">
    <property type="pathway name" value="AUF1 (hnRNP D0) binds and destabilizes mRNA"/>
</dbReference>
<dbReference type="Reactome" id="R-MMU-4608870">
    <property type="pathway name" value="Asymmetric localization of PCP proteins"/>
</dbReference>
<dbReference type="Reactome" id="R-MMU-4641257">
    <property type="pathway name" value="Degradation of AXIN"/>
</dbReference>
<dbReference type="Reactome" id="R-MMU-4641258">
    <property type="pathway name" value="Degradation of DVL"/>
</dbReference>
<dbReference type="Reactome" id="R-MMU-5358346">
    <property type="pathway name" value="Hedgehog ligand biogenesis"/>
</dbReference>
<dbReference type="Reactome" id="R-MMU-5607761">
    <property type="pathway name" value="Dectin-1 mediated noncanonical NF-kB signaling"/>
</dbReference>
<dbReference type="Reactome" id="R-MMU-5607764">
    <property type="pathway name" value="CLEC7A (Dectin-1) signaling"/>
</dbReference>
<dbReference type="Reactome" id="R-MMU-5610780">
    <property type="pathway name" value="Degradation of GLI1 by the proteasome"/>
</dbReference>
<dbReference type="Reactome" id="R-MMU-5610785">
    <property type="pathway name" value="GLI3 is processed to GLI3R by the proteasome"/>
</dbReference>
<dbReference type="Reactome" id="R-MMU-5632684">
    <property type="pathway name" value="Hedgehog 'on' state"/>
</dbReference>
<dbReference type="Reactome" id="R-MMU-5658442">
    <property type="pathway name" value="Regulation of RAS by GAPs"/>
</dbReference>
<dbReference type="Reactome" id="R-MMU-5668541">
    <property type="pathway name" value="TNFR2 non-canonical NF-kB pathway"/>
</dbReference>
<dbReference type="Reactome" id="R-MMU-5676590">
    <property type="pathway name" value="NIK--&gt;noncanonical NF-kB signaling"/>
</dbReference>
<dbReference type="Reactome" id="R-MMU-5687128">
    <property type="pathway name" value="MAPK6/MAPK4 signaling"/>
</dbReference>
<dbReference type="Reactome" id="R-MMU-5689603">
    <property type="pathway name" value="UCH proteinases"/>
</dbReference>
<dbReference type="Reactome" id="R-MMU-5689880">
    <property type="pathway name" value="Ub-specific processing proteases"/>
</dbReference>
<dbReference type="Reactome" id="R-MMU-6798695">
    <property type="pathway name" value="Neutrophil degranulation"/>
</dbReference>
<dbReference type="Reactome" id="R-MMU-68867">
    <property type="pathway name" value="Assembly of the pre-replicative complex"/>
</dbReference>
<dbReference type="Reactome" id="R-MMU-68949">
    <property type="pathway name" value="Orc1 removal from chromatin"/>
</dbReference>
<dbReference type="Reactome" id="R-MMU-69017">
    <property type="pathway name" value="CDK-mediated phosphorylation and removal of Cdc6"/>
</dbReference>
<dbReference type="Reactome" id="R-MMU-69481">
    <property type="pathway name" value="G2/M Checkpoints"/>
</dbReference>
<dbReference type="Reactome" id="R-MMU-69601">
    <property type="pathway name" value="Ubiquitin Mediated Degradation of Phosphorylated Cdc25A"/>
</dbReference>
<dbReference type="Reactome" id="R-MMU-75815">
    <property type="pathway name" value="Ubiquitin-dependent degradation of Cyclin D"/>
</dbReference>
<dbReference type="Reactome" id="R-MMU-8852276">
    <property type="pathway name" value="The role of GTSE1 in G2/M progression after G2 checkpoint"/>
</dbReference>
<dbReference type="Reactome" id="R-MMU-8854050">
    <property type="pathway name" value="FBXL7 down-regulates AURKA during mitotic entry and in early mitosis"/>
</dbReference>
<dbReference type="Reactome" id="R-MMU-8939236">
    <property type="pathway name" value="RUNX1 regulates transcription of genes involved in differentiation of HSCs"/>
</dbReference>
<dbReference type="Reactome" id="R-MMU-8939902">
    <property type="pathway name" value="Regulation of RUNX2 expression and activity"/>
</dbReference>
<dbReference type="Reactome" id="R-MMU-8941858">
    <property type="pathway name" value="Regulation of RUNX3 expression and activity"/>
</dbReference>
<dbReference type="Reactome" id="R-MMU-8948751">
    <property type="pathway name" value="Regulation of PTEN stability and activity"/>
</dbReference>
<dbReference type="Reactome" id="R-MMU-8951664">
    <property type="pathway name" value="Neddylation"/>
</dbReference>
<dbReference type="Reactome" id="R-MMU-9020702">
    <property type="pathway name" value="Interleukin-1 signaling"/>
</dbReference>
<dbReference type="Reactome" id="R-MMU-9755511">
    <property type="pathway name" value="KEAP1-NFE2L2 pathway"/>
</dbReference>
<dbReference type="Reactome" id="R-MMU-9762114">
    <property type="pathway name" value="GSK3B and BTRC:CUL1-mediated-degradation of NFE2L2"/>
</dbReference>
<dbReference type="Reactome" id="R-MMU-983168">
    <property type="pathway name" value="Antigen processing: Ubiquitination &amp; Proteasome degradation"/>
</dbReference>
<dbReference type="Reactome" id="R-MMU-9907900">
    <property type="pathway name" value="Proteasome assembly"/>
</dbReference>
<dbReference type="BioGRID-ORCS" id="69077">
    <property type="hits" value="25 hits in 79 CRISPR screens"/>
</dbReference>
<dbReference type="ChiTaRS" id="Psmd11">
    <property type="organism name" value="mouse"/>
</dbReference>
<dbReference type="PRO" id="PR:Q8BG32"/>
<dbReference type="Proteomes" id="UP000000589">
    <property type="component" value="Chromosome 11"/>
</dbReference>
<dbReference type="RNAct" id="Q8BG32">
    <property type="molecule type" value="protein"/>
</dbReference>
<dbReference type="Bgee" id="ENSMUSG00000017428">
    <property type="expression patterns" value="Expressed in blastoderm cell in morula and 273 other cell types or tissues"/>
</dbReference>
<dbReference type="ExpressionAtlas" id="Q8BG32">
    <property type="expression patterns" value="baseline and differential"/>
</dbReference>
<dbReference type="GO" id="GO:0022624">
    <property type="term" value="C:proteasome accessory complex"/>
    <property type="evidence" value="ECO:0000314"/>
    <property type="project" value="UniProtKB"/>
</dbReference>
<dbReference type="GO" id="GO:0005838">
    <property type="term" value="C:proteasome regulatory particle"/>
    <property type="evidence" value="ECO:0000314"/>
    <property type="project" value="MGI"/>
</dbReference>
<dbReference type="GO" id="GO:0043248">
    <property type="term" value="P:proteasome assembly"/>
    <property type="evidence" value="ECO:0000250"/>
    <property type="project" value="UniProtKB"/>
</dbReference>
<dbReference type="GO" id="GO:0048863">
    <property type="term" value="P:stem cell differentiation"/>
    <property type="evidence" value="ECO:0000250"/>
    <property type="project" value="UniProtKB"/>
</dbReference>
<dbReference type="GO" id="GO:0006511">
    <property type="term" value="P:ubiquitin-dependent protein catabolic process"/>
    <property type="evidence" value="ECO:0000250"/>
    <property type="project" value="UniProtKB"/>
</dbReference>
<dbReference type="FunFam" id="1.25.40.570:FF:000003">
    <property type="entry name" value="26S proteasome non-ATPase regulatory subunit 11"/>
    <property type="match status" value="1"/>
</dbReference>
<dbReference type="Gene3D" id="1.25.40.570">
    <property type="match status" value="1"/>
</dbReference>
<dbReference type="InterPro" id="IPR050871">
    <property type="entry name" value="26S_Proteasome/COP9_Components"/>
</dbReference>
<dbReference type="InterPro" id="IPR000717">
    <property type="entry name" value="PCI_dom"/>
</dbReference>
<dbReference type="InterPro" id="IPR040780">
    <property type="entry name" value="Rpn6_C_helix"/>
</dbReference>
<dbReference type="InterPro" id="IPR040773">
    <property type="entry name" value="Rpn6_N"/>
</dbReference>
<dbReference type="InterPro" id="IPR011990">
    <property type="entry name" value="TPR-like_helical_dom_sf"/>
</dbReference>
<dbReference type="InterPro" id="IPR036390">
    <property type="entry name" value="WH_DNA-bd_sf"/>
</dbReference>
<dbReference type="PANTHER" id="PTHR10678">
    <property type="entry name" value="26S PROTEASOME NON-ATPASE REGULATORY SUBUNIT 11/COP9 SIGNALOSOME COMPLEX SUBUNIT 2"/>
    <property type="match status" value="1"/>
</dbReference>
<dbReference type="Pfam" id="PF01399">
    <property type="entry name" value="PCI"/>
    <property type="match status" value="1"/>
</dbReference>
<dbReference type="Pfam" id="PF18503">
    <property type="entry name" value="RPN6_C_helix"/>
    <property type="match status" value="1"/>
</dbReference>
<dbReference type="Pfam" id="PF18055">
    <property type="entry name" value="RPN6_N"/>
    <property type="match status" value="1"/>
</dbReference>
<dbReference type="SMART" id="SM00753">
    <property type="entry name" value="PAM"/>
    <property type="match status" value="1"/>
</dbReference>
<dbReference type="SMART" id="SM00088">
    <property type="entry name" value="PINT"/>
    <property type="match status" value="1"/>
</dbReference>
<dbReference type="SUPFAM" id="SSF48452">
    <property type="entry name" value="TPR-like"/>
    <property type="match status" value="1"/>
</dbReference>
<dbReference type="SUPFAM" id="SSF46785">
    <property type="entry name" value="Winged helix' DNA-binding domain"/>
    <property type="match status" value="1"/>
</dbReference>
<dbReference type="PROSITE" id="PS50250">
    <property type="entry name" value="PCI"/>
    <property type="match status" value="1"/>
</dbReference>
<evidence type="ECO:0000250" key="1">
    <source>
        <dbReference type="UniProtKB" id="O00231"/>
    </source>
</evidence>
<evidence type="ECO:0000255" key="2">
    <source>
        <dbReference type="PROSITE-ProRule" id="PRU01185"/>
    </source>
</evidence>
<evidence type="ECO:0000269" key="3">
    <source>
    </source>
</evidence>
<evidence type="ECO:0000269" key="4">
    <source ref="2"/>
</evidence>
<evidence type="ECO:0000305" key="5"/>
<evidence type="ECO:0007744" key="6">
    <source>
    </source>
</evidence>
<protein>
    <recommendedName>
        <fullName>26S proteasome non-ATPase regulatory subunit 11</fullName>
    </recommendedName>
    <alternativeName>
        <fullName>26S proteasome regulatory subunit RPN6</fullName>
    </alternativeName>
    <alternativeName>
        <fullName>26S proteasome regulatory subunit S9</fullName>
    </alternativeName>
    <alternativeName>
        <fullName>26S proteasome regulatory subunit p44.5</fullName>
    </alternativeName>
</protein>
<proteinExistence type="evidence at protein level"/>
<name>PSD11_MOUSE</name>